<keyword id="KW-0004">4Fe-4S</keyword>
<keyword id="KW-0017">Alkaloid metabolism</keyword>
<keyword id="KW-0150">Chloroplast</keyword>
<keyword id="KW-0408">Iron</keyword>
<keyword id="KW-0411">Iron-sulfur</keyword>
<keyword id="KW-0479">Metal-binding</keyword>
<keyword id="KW-0934">Plastid</keyword>
<keyword id="KW-0662">Pyridine nucleotide biosynthesis</keyword>
<keyword id="KW-1185">Reference proteome</keyword>
<keyword id="KW-0808">Transferase</keyword>
<keyword id="KW-0809">Transit peptide</keyword>
<sequence>MDAANLVMKSSMFSKSPCPVFGSKLIPRAPPSVFTLPSTFRPLVKCIQASFPQNPDSKIPSNNSTFTCSAVTSFPSQQSQPHATSDAKLQLLISEFQSLVEPMDRVKRLLHYSTLIPSMDASLKTPENRVLGCTTQVWLHVSFDEAENRMKFVADSDSDITKGFCACLVSLLDGATPDEVLALKTEDLNALNVAGLNGKGSASRANTWHNVLVSMQKRTRALVAEREGRPRNELFPSLVITADGIQPQGSYAEAQARFLFPDESRVQELASLLKEKKIGVVAHFYMDPEVQGVLTAAQKLWPHIHISDSLVMADKAVSMAKAGCEYISVLGVDFMSENVRAILDLAGFPEVGVYRMSDERIGCSLADAAASPAYLDYLKTASTSSPSLHVVYINTSLETKAYSHELVPTITCTSSNVVQTILQAFAEVPDLEVLYGPDTYMGSNIAELFTQMSTMTDEEISEIHPLHNRSSIKSLLPRLHYFQDGTCIVHHLFGHEVVENINEMYGDAFLTAHFEVPGEMFSLAMEAKKRGMGVVGSTSNILDFIKERVEEALNRNVDEHLQFVLGTESGMITAIVAAVGKLLGSADTSSGGAKVSVEIVFPVSSESVTRTSTGSSLDQNKVNIIPGVASGEGCSLHGGCASCPYMKMNSLSSLLRVCQSLPHGKAELSAYEAGRFSLQTPNGKQIADVGCEPVLHMRHFQATKRLPEQLINQILQRSSSA</sequence>
<accession>A0A1S4BZI5</accession>
<evidence type="ECO:0000250" key="1">
    <source>
        <dbReference type="UniProtKB" id="O57767"/>
    </source>
</evidence>
<evidence type="ECO:0000250" key="2">
    <source>
        <dbReference type="UniProtKB" id="Q9FGS4"/>
    </source>
</evidence>
<evidence type="ECO:0000255" key="3"/>
<evidence type="ECO:0000269" key="4">
    <source>
    </source>
</evidence>
<evidence type="ECO:0000303" key="5">
    <source>
    </source>
</evidence>
<evidence type="ECO:0000305" key="6"/>
<evidence type="ECO:0000312" key="7">
    <source>
        <dbReference type="RefSeq" id="XP_016494243.1"/>
    </source>
</evidence>
<comment type="function">
    <text evidence="2 4 5">Involved in the biosynthesis of pyridine alkaloid natural products, leading mainly to the production of anabasine, anatabine, nicotine and nornicotine, effective deterrents against herbivores with antiparasitic and pesticide properties (neurotoxins); nornicotine serves as the precursor in the synthesis of the carcinogen compound N'-nitrosonornicotine (NNN) (PubMed:23953973, PubMed:31276744). Catalyzes the condensation of iminoaspartate with dihydroxyacetone phosphate to form quinolinate (By similarity).</text>
</comment>
<comment type="catalytic activity">
    <reaction evidence="2">
        <text>iminosuccinate + dihydroxyacetone phosphate = quinolinate + phosphate + 2 H2O + H(+)</text>
        <dbReference type="Rhea" id="RHEA:25888"/>
        <dbReference type="ChEBI" id="CHEBI:15377"/>
        <dbReference type="ChEBI" id="CHEBI:15378"/>
        <dbReference type="ChEBI" id="CHEBI:29959"/>
        <dbReference type="ChEBI" id="CHEBI:43474"/>
        <dbReference type="ChEBI" id="CHEBI:57642"/>
        <dbReference type="ChEBI" id="CHEBI:77875"/>
        <dbReference type="EC" id="2.5.1.72"/>
    </reaction>
</comment>
<comment type="cofactor">
    <cofactor evidence="2">
        <name>[4Fe-4S] cluster</name>
        <dbReference type="ChEBI" id="CHEBI:49883"/>
    </cofactor>
    <text evidence="2">Binds 1 [4Fe-4S] cluster per subunit.</text>
</comment>
<comment type="pathway">
    <text evidence="4">Alkaloid biosynthesis; nicotine biosynthesis.</text>
</comment>
<comment type="pathway">
    <text evidence="2">Cofactor biosynthesis; NAD(+) biosynthesis; quinolinate from iminoaspartate: step 1/1.</text>
</comment>
<comment type="subunit">
    <text evidence="2">Homodimer.</text>
</comment>
<comment type="subcellular location">
    <subcellularLocation>
        <location evidence="2">Plastid</location>
        <location evidence="2">Chloroplast</location>
    </subcellularLocation>
</comment>
<comment type="similarity">
    <text evidence="6">Belongs to the quinolinate synthase family. Type 1 subfamily.</text>
</comment>
<proteinExistence type="inferred from homology"/>
<protein>
    <recommendedName>
        <fullName evidence="2">Quinolinate synthase, chloroplastic</fullName>
        <ecNumber evidence="2">2.5.1.72</ecNumber>
    </recommendedName>
</protein>
<dbReference type="EC" id="2.5.1.72" evidence="2"/>
<dbReference type="RefSeq" id="XP_016494243.1">
    <property type="nucleotide sequence ID" value="XM_016638757.1"/>
</dbReference>
<dbReference type="SMR" id="A0A1S4BZI5"/>
<dbReference type="STRING" id="4097.A0A1S4BZI5"/>
<dbReference type="PaxDb" id="4097-A0A1S4BZI5"/>
<dbReference type="GeneID" id="107813484"/>
<dbReference type="KEGG" id="nta:107813484"/>
<dbReference type="OMA" id="MRFWADS"/>
<dbReference type="OrthoDB" id="66991at2759"/>
<dbReference type="UniPathway" id="UPA00107"/>
<dbReference type="UniPathway" id="UPA00253">
    <property type="reaction ID" value="UER00327"/>
</dbReference>
<dbReference type="Proteomes" id="UP000084051">
    <property type="component" value="Unplaced"/>
</dbReference>
<dbReference type="GO" id="GO:0009507">
    <property type="term" value="C:chloroplast"/>
    <property type="evidence" value="ECO:0000318"/>
    <property type="project" value="GO_Central"/>
</dbReference>
<dbReference type="GO" id="GO:0051539">
    <property type="term" value="F:4 iron, 4 sulfur cluster binding"/>
    <property type="evidence" value="ECO:0000318"/>
    <property type="project" value="GO_Central"/>
</dbReference>
<dbReference type="GO" id="GO:0046872">
    <property type="term" value="F:metal ion binding"/>
    <property type="evidence" value="ECO:0007669"/>
    <property type="project" value="UniProtKB-KW"/>
</dbReference>
<dbReference type="GO" id="GO:0008987">
    <property type="term" value="F:quinolinate synthetase A activity"/>
    <property type="evidence" value="ECO:0000318"/>
    <property type="project" value="GO_Central"/>
</dbReference>
<dbReference type="GO" id="GO:0034628">
    <property type="term" value="P:'de novo' NAD biosynthetic process from L-aspartate"/>
    <property type="evidence" value="ECO:0000318"/>
    <property type="project" value="GO_Central"/>
</dbReference>
<dbReference type="GO" id="GO:0009820">
    <property type="term" value="P:alkaloid metabolic process"/>
    <property type="evidence" value="ECO:0007669"/>
    <property type="project" value="UniProtKB-KW"/>
</dbReference>
<dbReference type="GO" id="GO:0042179">
    <property type="term" value="P:nicotine biosynthetic process"/>
    <property type="evidence" value="ECO:0007669"/>
    <property type="project" value="UniProtKB-UniPathway"/>
</dbReference>
<dbReference type="FunFam" id="3.40.50.10800:FF:000008">
    <property type="entry name" value="Quinolinate synthase chloroplastic"/>
    <property type="match status" value="1"/>
</dbReference>
<dbReference type="FunFam" id="3.40.50.10800:FF:000006">
    <property type="entry name" value="Quinolinate synthase, chloroplastic"/>
    <property type="match status" value="1"/>
</dbReference>
<dbReference type="Gene3D" id="3.90.1010.10">
    <property type="match status" value="1"/>
</dbReference>
<dbReference type="Gene3D" id="3.40.50.10800">
    <property type="entry name" value="NadA-like"/>
    <property type="match status" value="3"/>
</dbReference>
<dbReference type="InterPro" id="IPR003808">
    <property type="entry name" value="Fe-S_metab-assoc_dom"/>
</dbReference>
<dbReference type="InterPro" id="IPR003473">
    <property type="entry name" value="NadA"/>
</dbReference>
<dbReference type="InterPro" id="IPR036094">
    <property type="entry name" value="NadA_sf"/>
</dbReference>
<dbReference type="PANTHER" id="PTHR30573:SF0">
    <property type="entry name" value="QUINOLINATE SYNTHASE, CHLOROPLASTIC"/>
    <property type="match status" value="1"/>
</dbReference>
<dbReference type="PANTHER" id="PTHR30573">
    <property type="entry name" value="QUINOLINATE SYNTHETASE A"/>
    <property type="match status" value="1"/>
</dbReference>
<dbReference type="Pfam" id="PF02445">
    <property type="entry name" value="NadA"/>
    <property type="match status" value="1"/>
</dbReference>
<dbReference type="Pfam" id="PF02657">
    <property type="entry name" value="SufE"/>
    <property type="match status" value="1"/>
</dbReference>
<dbReference type="SUPFAM" id="SSF142754">
    <property type="entry name" value="NadA-like"/>
    <property type="match status" value="1"/>
</dbReference>
<dbReference type="SUPFAM" id="SSF82649">
    <property type="entry name" value="SufE/NifU"/>
    <property type="match status" value="1"/>
</dbReference>
<organism>
    <name type="scientific">Nicotiana tabacum</name>
    <name type="common">Common tobacco</name>
    <dbReference type="NCBI Taxonomy" id="4097"/>
    <lineage>
        <taxon>Eukaryota</taxon>
        <taxon>Viridiplantae</taxon>
        <taxon>Streptophyta</taxon>
        <taxon>Embryophyta</taxon>
        <taxon>Tracheophyta</taxon>
        <taxon>Spermatophyta</taxon>
        <taxon>Magnoliopsida</taxon>
        <taxon>eudicotyledons</taxon>
        <taxon>Gunneridae</taxon>
        <taxon>Pentapetalae</taxon>
        <taxon>asterids</taxon>
        <taxon>lamiids</taxon>
        <taxon>Solanales</taxon>
        <taxon>Solanaceae</taxon>
        <taxon>Nicotianoideae</taxon>
        <taxon>Nicotianeae</taxon>
        <taxon>Nicotiana</taxon>
    </lineage>
</organism>
<feature type="transit peptide" description="Chloroplast" evidence="3">
    <location>
        <begin position="1"/>
        <end position="67"/>
    </location>
</feature>
<feature type="chain" id="PRO_0000455788" description="Quinolinate synthase, chloroplastic">
    <location>
        <begin position="68"/>
        <end position="721"/>
    </location>
</feature>
<feature type="active site" description="Cysteine persulfide intermediate" evidence="2">
    <location>
        <position position="133"/>
    </location>
</feature>
<feature type="binding site" evidence="1">
    <location>
        <position position="283"/>
    </location>
    <ligand>
        <name>iminosuccinate</name>
        <dbReference type="ChEBI" id="CHEBI:77875"/>
    </ligand>
</feature>
<feature type="binding site" evidence="1">
    <location>
        <position position="309"/>
    </location>
    <ligand>
        <name>iminosuccinate</name>
        <dbReference type="ChEBI" id="CHEBI:77875"/>
    </ligand>
</feature>
<feature type="binding site" evidence="1">
    <location>
        <position position="363"/>
    </location>
    <ligand>
        <name>[4Fe-4S] cluster</name>
        <dbReference type="ChEBI" id="CHEBI:49883"/>
    </ligand>
</feature>
<feature type="binding site" evidence="1">
    <location>
        <begin position="392"/>
        <end position="394"/>
    </location>
    <ligand>
        <name>iminosuccinate</name>
        <dbReference type="ChEBI" id="CHEBI:77875"/>
    </ligand>
</feature>
<feature type="binding site" evidence="1">
    <location>
        <position position="414"/>
    </location>
    <ligand>
        <name>iminosuccinate</name>
        <dbReference type="ChEBI" id="CHEBI:77875"/>
    </ligand>
</feature>
<feature type="binding site" evidence="1">
    <location>
        <position position="487"/>
    </location>
    <ligand>
        <name>[4Fe-4S] cluster</name>
        <dbReference type="ChEBI" id="CHEBI:49883"/>
    </ligand>
</feature>
<feature type="binding site" evidence="1">
    <location>
        <begin position="513"/>
        <end position="515"/>
    </location>
    <ligand>
        <name>iminosuccinate</name>
        <dbReference type="ChEBI" id="CHEBI:77875"/>
    </ligand>
</feature>
<feature type="binding site" evidence="1">
    <location>
        <position position="538"/>
    </location>
    <ligand>
        <name>iminosuccinate</name>
        <dbReference type="ChEBI" id="CHEBI:77875"/>
    </ligand>
</feature>
<feature type="binding site" evidence="1">
    <location>
        <position position="643"/>
    </location>
    <ligand>
        <name>[4Fe-4S] cluster</name>
        <dbReference type="ChEBI" id="CHEBI:49883"/>
    </ligand>
</feature>
<gene>
    <name evidence="2" type="primary">QS</name>
    <name evidence="7" type="ORF">LOC107813484</name>
</gene>
<reference key="1">
    <citation type="journal article" date="2014" name="Nat. Commun.">
        <title>The tobacco genome sequence and its comparison with those of tomato and potato.</title>
        <authorList>
            <person name="Sierro N."/>
            <person name="Battey J.N."/>
            <person name="Ouadi S."/>
            <person name="Bakaher N."/>
            <person name="Bovet L."/>
            <person name="Willig A."/>
            <person name="Goepfert S."/>
            <person name="Peitsch M.C."/>
            <person name="Ivanov N.V."/>
        </authorList>
    </citation>
    <scope>NUCLEOTIDE SEQUENCE [LARGE SCALE GENOMIC DNA]</scope>
    <source>
        <strain>cv. TN90</strain>
    </source>
</reference>
<reference key="2">
    <citation type="journal article" date="2013" name="Phytochemistry">
        <title>Molecular genetics of alkaloid biosynthesis in Nicotiana tabacum.</title>
        <authorList>
            <person name="Dewey R.E."/>
            <person name="Xie J."/>
        </authorList>
    </citation>
    <scope>REVIEW ON ALKALOID BIOSYNTHESIS IN NICOTIANA TABACUM</scope>
</reference>
<reference key="3">
    <citation type="journal article" date="2015" name="Mol. Genet. Genomics">
        <title>Current status and prospects for the study of Nicotiana genomics, genetics, and nicotine biosynthesis genes.</title>
        <authorList>
            <person name="Wang X."/>
            <person name="Bennetzen J.L."/>
        </authorList>
    </citation>
    <scope>REVIEW ON NICOTINE BIOSYNTHESIS</scope>
</reference>
<reference key="4">
    <citation type="journal article" date="2019" name="Food Chem. Toxicol.">
        <title>Antiparasitic properties of leaf extracts derived from selected Nicotiana species and Nicotiana tabacum varieties.</title>
        <authorList>
            <person name="Schorderet Weber S."/>
            <person name="Kaminski K.P."/>
            <person name="Perret J.-L."/>
            <person name="Leroy P."/>
            <person name="Mazurov A."/>
            <person name="Peitsch M.C."/>
            <person name="Ivanov N.V."/>
            <person name="Hoeng J."/>
        </authorList>
    </citation>
    <scope>FUNCTION</scope>
    <scope>PATHWAY</scope>
    <source>
        <strain>cv. Burley Stella</strain>
        <strain>cv. Burley TN90</strain>
        <strain>cv. Virginia ITB 683</strain>
        <strain>cv. Virginia K326</strain>
    </source>
</reference>
<name>QS1_TOBAC</name>